<organism>
    <name type="scientific">Brucella suis biovar 1 (strain 1330)</name>
    <dbReference type="NCBI Taxonomy" id="204722"/>
    <lineage>
        <taxon>Bacteria</taxon>
        <taxon>Pseudomonadati</taxon>
        <taxon>Pseudomonadota</taxon>
        <taxon>Alphaproteobacteria</taxon>
        <taxon>Hyphomicrobiales</taxon>
        <taxon>Brucellaceae</taxon>
        <taxon>Brucella/Ochrobactrum group</taxon>
        <taxon>Brucella</taxon>
    </lineage>
</organism>
<proteinExistence type="inferred from homology"/>
<feature type="signal peptide" evidence="1">
    <location>
        <begin position="1"/>
        <end position="23"/>
    </location>
</feature>
<feature type="chain" id="PRO_0000021883" description="25 kDa outer-membrane immunogenic protein">
    <location>
        <begin position="24"/>
        <end position="213"/>
    </location>
</feature>
<gene>
    <name type="primary">omp25</name>
    <name type="ordered locus">BR0701</name>
    <name type="ordered locus">BS1330_I0697</name>
</gene>
<comment type="subcellular location">
    <subcellularLocation>
        <location>Cell outer membrane</location>
    </subcellularLocation>
</comment>
<comment type="similarity">
    <text evidence="2">Belongs to the Omp25/RopB family.</text>
</comment>
<protein>
    <recommendedName>
        <fullName>25 kDa outer-membrane immunogenic protein</fullName>
    </recommendedName>
</protein>
<evidence type="ECO:0000255" key="1"/>
<evidence type="ECO:0000305" key="2"/>
<dbReference type="EMBL" id="U39397">
    <property type="protein sequence ID" value="AAB36695.1"/>
    <property type="molecule type" value="Genomic_DNA"/>
</dbReference>
<dbReference type="EMBL" id="AE014291">
    <property type="protein sequence ID" value="AAN29630.1"/>
    <property type="molecule type" value="Genomic_DNA"/>
</dbReference>
<dbReference type="EMBL" id="CP002997">
    <property type="protein sequence ID" value="AEM18047.1"/>
    <property type="molecule type" value="Genomic_DNA"/>
</dbReference>
<dbReference type="RefSeq" id="WP_002963844.1">
    <property type="nucleotide sequence ID" value="NZ_KN046804.1"/>
</dbReference>
<dbReference type="SMR" id="Q45689"/>
<dbReference type="GeneID" id="97533976"/>
<dbReference type="KEGG" id="bms:BR0701"/>
<dbReference type="KEGG" id="bsi:BS1330_I0697"/>
<dbReference type="PATRIC" id="fig|204722.22.peg.1143"/>
<dbReference type="HOGENOM" id="CLU_037100_4_0_5"/>
<dbReference type="PhylomeDB" id="Q45689"/>
<dbReference type="PRO" id="PR:Q45689"/>
<dbReference type="Proteomes" id="UP000007104">
    <property type="component" value="Chromosome I"/>
</dbReference>
<dbReference type="GO" id="GO:0009279">
    <property type="term" value="C:cell outer membrane"/>
    <property type="evidence" value="ECO:0007669"/>
    <property type="project" value="UniProtKB-SubCell"/>
</dbReference>
<dbReference type="Gene3D" id="2.40.160.20">
    <property type="match status" value="1"/>
</dbReference>
<dbReference type="InterPro" id="IPR051692">
    <property type="entry name" value="OMP-like"/>
</dbReference>
<dbReference type="InterPro" id="IPR011250">
    <property type="entry name" value="OMP/PagP_b-brl"/>
</dbReference>
<dbReference type="InterPro" id="IPR027385">
    <property type="entry name" value="OMP_b-brl"/>
</dbReference>
<dbReference type="PANTHER" id="PTHR34001">
    <property type="entry name" value="BLL7405 PROTEIN"/>
    <property type="match status" value="1"/>
</dbReference>
<dbReference type="PANTHER" id="PTHR34001:SF3">
    <property type="entry name" value="BLL7405 PROTEIN"/>
    <property type="match status" value="1"/>
</dbReference>
<dbReference type="Pfam" id="PF13505">
    <property type="entry name" value="OMP_b-brl"/>
    <property type="match status" value="1"/>
</dbReference>
<dbReference type="SUPFAM" id="SSF56925">
    <property type="entry name" value="OMPA-like"/>
    <property type="match status" value="1"/>
</dbReference>
<sequence>MRTLKSLVIVSAALLPFSATAFAADAIQEQPPVPAPVEVAPQYSWAGGYTGLYLGYGWNKAKTSTVGSIKPDDWKAGAFAGWNFQQDQIVYGVEGDAGYSWAKKSKDGLEVKQGFEGSLRARVGYDLNPVMPYLTAGIAGSQIKLNNGLDDESKFRVGWTAGAGLEAKLTDNILGRVEYRYTQYGNKNYDLAGTTVRNKLDTQDIRVGIGYKF</sequence>
<keyword id="KW-0998">Cell outer membrane</keyword>
<keyword id="KW-0472">Membrane</keyword>
<keyword id="KW-0732">Signal</keyword>
<keyword id="KW-0812">Transmembrane</keyword>
<keyword id="KW-1134">Transmembrane beta strand</keyword>
<reference key="1">
    <citation type="journal article" date="1996" name="Infect. Immun.">
        <title>Nucleotide sequence and expression of the gene encoding the major 25-kilodalton outer membrane protein of Brucella ovis: evidence for antigenic shift, compared with other Brucella species, due to a deletion in the gene.</title>
        <authorList>
            <person name="Cloeckaert A."/>
            <person name="Verger J.M."/>
            <person name="Grayon M."/>
            <person name="Zygmunt M.S."/>
            <person name="Grepinet O."/>
        </authorList>
    </citation>
    <scope>NUCLEOTIDE SEQUENCE [GENOMIC DNA]</scope>
    <source>
        <strain>1330</strain>
    </source>
</reference>
<reference key="2">
    <citation type="journal article" date="2002" name="Proc. Natl. Acad. Sci. U.S.A.">
        <title>The Brucella suis genome reveals fundamental similarities between animal and plant pathogens and symbionts.</title>
        <authorList>
            <person name="Paulsen I.T."/>
            <person name="Seshadri R."/>
            <person name="Nelson K.E."/>
            <person name="Eisen J.A."/>
            <person name="Heidelberg J.F."/>
            <person name="Read T.D."/>
            <person name="Dodson R.J."/>
            <person name="Umayam L.A."/>
            <person name="Brinkac L.M."/>
            <person name="Beanan M.J."/>
            <person name="Daugherty S.C."/>
            <person name="DeBoy R.T."/>
            <person name="Durkin A.S."/>
            <person name="Kolonay J.F."/>
            <person name="Madupu R."/>
            <person name="Nelson W.C."/>
            <person name="Ayodeji B."/>
            <person name="Kraul M."/>
            <person name="Shetty J."/>
            <person name="Malek J.A."/>
            <person name="Van Aken S.E."/>
            <person name="Riedmuller S."/>
            <person name="Tettelin H."/>
            <person name="Gill S.R."/>
            <person name="White O."/>
            <person name="Salzberg S.L."/>
            <person name="Hoover D.L."/>
            <person name="Lindler L.E."/>
            <person name="Halling S.M."/>
            <person name="Boyle S.M."/>
            <person name="Fraser C.M."/>
        </authorList>
    </citation>
    <scope>NUCLEOTIDE SEQUENCE [LARGE SCALE GENOMIC DNA]</scope>
    <source>
        <strain>1330</strain>
    </source>
</reference>
<reference key="3">
    <citation type="journal article" date="2011" name="J. Bacteriol.">
        <title>Revised genome sequence of Brucella suis 1330.</title>
        <authorList>
            <person name="Tae H."/>
            <person name="Shallom S."/>
            <person name="Settlage R."/>
            <person name="Preston D."/>
            <person name="Adams L.G."/>
            <person name="Garner H.R."/>
        </authorList>
    </citation>
    <scope>NUCLEOTIDE SEQUENCE [LARGE SCALE GENOMIC DNA]</scope>
    <source>
        <strain>1330</strain>
    </source>
</reference>
<name>OM25_BRUSU</name>
<accession>Q45689</accession>
<accession>G0K8C0</accession>